<gene>
    <name type="primary">Acot3</name>
    <name type="synonym">Pte1a</name>
    <name type="synonym">Pte2</name>
    <name type="synonym">Pte2a</name>
</gene>
<accession>Q9QYR7</accession>
<accession>Q6Q2Z7</accession>
<feature type="chain" id="PRO_0000202148" description="Acyl-coenzyme A thioesterase 3">
    <location>
        <begin position="1"/>
        <end position="432"/>
    </location>
</feature>
<feature type="short sequence motif" description="Microbody targeting signal" evidence="2">
    <location>
        <begin position="430"/>
        <end position="432"/>
    </location>
</feature>
<feature type="active site" description="Charge relay system" evidence="1">
    <location>
        <position position="243"/>
    </location>
</feature>
<feature type="active site" description="Charge relay system" evidence="1">
    <location>
        <position position="337"/>
    </location>
</feature>
<feature type="active site" description="Charge relay system" evidence="1">
    <location>
        <position position="371"/>
    </location>
</feature>
<feature type="splice variant" id="VSP_010994" description="In isoform 2." evidence="6">
    <location>
        <begin position="1"/>
        <end position="11"/>
    </location>
</feature>
<keyword id="KW-0025">Alternative splicing</keyword>
<keyword id="KW-0276">Fatty acid metabolism</keyword>
<keyword id="KW-0378">Hydrolase</keyword>
<keyword id="KW-0443">Lipid metabolism</keyword>
<keyword id="KW-0576">Peroxisome</keyword>
<keyword id="KW-1185">Reference proteome</keyword>
<keyword id="KW-0719">Serine esterase</keyword>
<comment type="function">
    <text evidence="4 5">Catalyzes the hydrolysis of acyl-CoAs into free fatty acids and coenzyme A (CoASH), regulating their respective intracellular levels (PubMed:15007068, PubMed:16940157). Mainly active on long-chain acyl-CoAs (PubMed:15007068, PubMed:16940157). May have a function in termination of beta-oxidation of fatty acids (PubMed:16940157).</text>
</comment>
<comment type="catalytic activity">
    <reaction evidence="4">
        <text>hexadecanoyl-CoA + H2O = hexadecanoate + CoA + H(+)</text>
        <dbReference type="Rhea" id="RHEA:16645"/>
        <dbReference type="ChEBI" id="CHEBI:7896"/>
        <dbReference type="ChEBI" id="CHEBI:15377"/>
        <dbReference type="ChEBI" id="CHEBI:15378"/>
        <dbReference type="ChEBI" id="CHEBI:57287"/>
        <dbReference type="ChEBI" id="CHEBI:57379"/>
        <dbReference type="EC" id="3.1.2.2"/>
    </reaction>
    <physiologicalReaction direction="left-to-right" evidence="8">
        <dbReference type="Rhea" id="RHEA:16646"/>
    </physiologicalReaction>
</comment>
<comment type="catalytic activity">
    <reaction evidence="4 5">
        <text>decanoyl-CoA + H2O = decanoate + CoA + H(+)</text>
        <dbReference type="Rhea" id="RHEA:40059"/>
        <dbReference type="ChEBI" id="CHEBI:15377"/>
        <dbReference type="ChEBI" id="CHEBI:15378"/>
        <dbReference type="ChEBI" id="CHEBI:27689"/>
        <dbReference type="ChEBI" id="CHEBI:57287"/>
        <dbReference type="ChEBI" id="CHEBI:61430"/>
    </reaction>
    <physiologicalReaction direction="left-to-right" evidence="8">
        <dbReference type="Rhea" id="RHEA:40060"/>
    </physiologicalReaction>
</comment>
<comment type="catalytic activity">
    <reaction evidence="4 5">
        <text>dodecanoyl-CoA + H2O = dodecanoate + CoA + H(+)</text>
        <dbReference type="Rhea" id="RHEA:30135"/>
        <dbReference type="ChEBI" id="CHEBI:15377"/>
        <dbReference type="ChEBI" id="CHEBI:15378"/>
        <dbReference type="ChEBI" id="CHEBI:18262"/>
        <dbReference type="ChEBI" id="CHEBI:57287"/>
        <dbReference type="ChEBI" id="CHEBI:57375"/>
    </reaction>
    <physiologicalReaction direction="left-to-right" evidence="8">
        <dbReference type="Rhea" id="RHEA:30136"/>
    </physiologicalReaction>
</comment>
<comment type="catalytic activity">
    <reaction evidence="4 5">
        <text>tetradecanoyl-CoA + H2O = tetradecanoate + CoA + H(+)</text>
        <dbReference type="Rhea" id="RHEA:40119"/>
        <dbReference type="ChEBI" id="CHEBI:15377"/>
        <dbReference type="ChEBI" id="CHEBI:15378"/>
        <dbReference type="ChEBI" id="CHEBI:30807"/>
        <dbReference type="ChEBI" id="CHEBI:57287"/>
        <dbReference type="ChEBI" id="CHEBI:57385"/>
    </reaction>
    <physiologicalReaction direction="left-to-right" evidence="8">
        <dbReference type="Rhea" id="RHEA:40120"/>
    </physiologicalReaction>
</comment>
<comment type="catalytic activity">
    <reaction evidence="4 5">
        <text>octadecanoyl-CoA + H2O = octadecanoate + CoA + H(+)</text>
        <dbReference type="Rhea" id="RHEA:30139"/>
        <dbReference type="ChEBI" id="CHEBI:15377"/>
        <dbReference type="ChEBI" id="CHEBI:15378"/>
        <dbReference type="ChEBI" id="CHEBI:25629"/>
        <dbReference type="ChEBI" id="CHEBI:57287"/>
        <dbReference type="ChEBI" id="CHEBI:57394"/>
    </reaction>
    <physiologicalReaction direction="left-to-right" evidence="8">
        <dbReference type="Rhea" id="RHEA:30140"/>
    </physiologicalReaction>
</comment>
<comment type="catalytic activity">
    <reaction evidence="4 5">
        <text>eicosanoyl-CoA + H2O = eicosanoate + CoA + H(+)</text>
        <dbReference type="Rhea" id="RHEA:40147"/>
        <dbReference type="ChEBI" id="CHEBI:15377"/>
        <dbReference type="ChEBI" id="CHEBI:15378"/>
        <dbReference type="ChEBI" id="CHEBI:32360"/>
        <dbReference type="ChEBI" id="CHEBI:57287"/>
        <dbReference type="ChEBI" id="CHEBI:57380"/>
    </reaction>
    <physiologicalReaction direction="left-to-right" evidence="8">
        <dbReference type="Rhea" id="RHEA:40148"/>
    </physiologicalReaction>
</comment>
<comment type="catalytic activity">
    <reaction evidence="4 5">
        <text>(9Z)-octadecenoyl-CoA + H2O = (9Z)-octadecenoate + CoA + H(+)</text>
        <dbReference type="Rhea" id="RHEA:40139"/>
        <dbReference type="ChEBI" id="CHEBI:15377"/>
        <dbReference type="ChEBI" id="CHEBI:15378"/>
        <dbReference type="ChEBI" id="CHEBI:30823"/>
        <dbReference type="ChEBI" id="CHEBI:57287"/>
        <dbReference type="ChEBI" id="CHEBI:57387"/>
    </reaction>
    <physiologicalReaction direction="left-to-right" evidence="8">
        <dbReference type="Rhea" id="RHEA:40140"/>
    </physiologicalReaction>
</comment>
<comment type="catalytic activity">
    <reaction evidence="4 5">
        <text>(9Z,12Z)-octadecadienoyl-CoA + H2O = (9Z,12Z)-octadecadienoate + CoA + H(+)</text>
        <dbReference type="Rhea" id="RHEA:40143"/>
        <dbReference type="ChEBI" id="CHEBI:15377"/>
        <dbReference type="ChEBI" id="CHEBI:15378"/>
        <dbReference type="ChEBI" id="CHEBI:30245"/>
        <dbReference type="ChEBI" id="CHEBI:57287"/>
        <dbReference type="ChEBI" id="CHEBI:57383"/>
    </reaction>
    <physiologicalReaction direction="left-to-right" evidence="8">
        <dbReference type="Rhea" id="RHEA:40144"/>
    </physiologicalReaction>
</comment>
<comment type="catalytic activity">
    <reaction evidence="4 5">
        <text>(5Z,8Z,11Z,14Z)-eicosatetraenoyl-CoA + H2O = (5Z,8Z,11Z,14Z)-eicosatetraenoate + CoA + H(+)</text>
        <dbReference type="Rhea" id="RHEA:40151"/>
        <dbReference type="ChEBI" id="CHEBI:15377"/>
        <dbReference type="ChEBI" id="CHEBI:15378"/>
        <dbReference type="ChEBI" id="CHEBI:32395"/>
        <dbReference type="ChEBI" id="CHEBI:57287"/>
        <dbReference type="ChEBI" id="CHEBI:57368"/>
    </reaction>
    <physiologicalReaction direction="left-to-right" evidence="8">
        <dbReference type="Rhea" id="RHEA:40152"/>
    </physiologicalReaction>
</comment>
<comment type="catalytic activity">
    <reaction evidence="4">
        <text>tetracosanoyl-CoA + H2O = tetracosanoate + CoA + H(+)</text>
        <dbReference type="Rhea" id="RHEA:40787"/>
        <dbReference type="ChEBI" id="CHEBI:15377"/>
        <dbReference type="ChEBI" id="CHEBI:15378"/>
        <dbReference type="ChEBI" id="CHEBI:31014"/>
        <dbReference type="ChEBI" id="CHEBI:57287"/>
        <dbReference type="ChEBI" id="CHEBI:65052"/>
    </reaction>
    <physiologicalReaction direction="left-to-right" evidence="8">
        <dbReference type="Rhea" id="RHEA:40788"/>
    </physiologicalReaction>
</comment>
<comment type="catalytic activity">
    <reaction evidence="4">
        <text>hexacosanoyl-CoA + H2O = hexacosanoate + CoA + H(+)</text>
        <dbReference type="Rhea" id="RHEA:40791"/>
        <dbReference type="ChEBI" id="CHEBI:15377"/>
        <dbReference type="ChEBI" id="CHEBI:15378"/>
        <dbReference type="ChEBI" id="CHEBI:31013"/>
        <dbReference type="ChEBI" id="CHEBI:57287"/>
        <dbReference type="ChEBI" id="CHEBI:64868"/>
    </reaction>
    <physiologicalReaction direction="left-to-right" evidence="8">
        <dbReference type="Rhea" id="RHEA:40792"/>
    </physiologicalReaction>
</comment>
<comment type="catalytic activity">
    <reaction evidence="4">
        <text>docosanoyl-CoA + H2O = docosanoate + CoA + H(+)</text>
        <dbReference type="Rhea" id="RHEA:40783"/>
        <dbReference type="ChEBI" id="CHEBI:15377"/>
        <dbReference type="ChEBI" id="CHEBI:15378"/>
        <dbReference type="ChEBI" id="CHEBI:23858"/>
        <dbReference type="ChEBI" id="CHEBI:57287"/>
        <dbReference type="ChEBI" id="CHEBI:65059"/>
    </reaction>
    <physiologicalReaction direction="left-to-right" evidence="8">
        <dbReference type="Rhea" id="RHEA:40784"/>
    </physiologicalReaction>
</comment>
<comment type="catalytic activity">
    <reaction evidence="4">
        <text>(9Z)-hexadecenoyl-CoA + H2O = (9Z)-hexadecenoate + CoA + H(+)</text>
        <dbReference type="Rhea" id="RHEA:40131"/>
        <dbReference type="ChEBI" id="CHEBI:15377"/>
        <dbReference type="ChEBI" id="CHEBI:15378"/>
        <dbReference type="ChEBI" id="CHEBI:32372"/>
        <dbReference type="ChEBI" id="CHEBI:57287"/>
        <dbReference type="ChEBI" id="CHEBI:61540"/>
    </reaction>
    <physiologicalReaction direction="left-to-right" evidence="8">
        <dbReference type="Rhea" id="RHEA:40132"/>
    </physiologicalReaction>
</comment>
<comment type="biophysicochemical properties">
    <kinetics>
        <KM evidence="4">10.9 uM for hexanoyl-coA</KM>
        <KM evidence="4">46.2 uM for octanoyl-coA</KM>
        <KM evidence="4">7.7 uM for decanoyl-coA</KM>
        <KM evidence="4">7.6 uM for dodecanoyl-coA</KM>
        <KM evidence="4">3.8 uM for tetradecanoyl-coA</KM>
        <KM evidence="4">4 uM for hexadecanoyl-coA</KM>
        <KM evidence="4">2.8 uM for (9Z)-hexadecenoyl-coA</KM>
        <KM evidence="4">4.2 uM for octadecanoyl-coA</KM>
        <KM evidence="4">4.6 uM for (9Z)-octadecenoyl-coA</KM>
        <KM evidence="4">2.6 uM for (9Z,12Z)-octadecadienoyl-coA</KM>
        <KM evidence="4">2.2 uM for eicosanoyl-coA</KM>
        <KM evidence="4">7.2 uM for (5Z,8Z,11Z,14Z)-eicosatetraenoyl-coA</KM>
        <KM evidence="4">2.3 uM for docosanoyl-coA</KM>
        <KM evidence="4">6.3 uM for tetracosanoyl-coA</KM>
        <KM evidence="4">4.5 uM for hexacosanoyl-coA</KM>
        <Vmax evidence="4">0.02 umol/min/mg enzyme with hexanoyl-coA as substrate</Vmax>
        <Vmax evidence="4">0.23 umol/min/mg enzyme with octanoyl-coA as substrate</Vmax>
        <Vmax evidence="4">0.87 umol/min/mg enzyme with decanoyl-coA as substrate</Vmax>
        <Vmax evidence="4">1.4 umol/min/mg enzyme with dodecanoyl-coA as substrate</Vmax>
        <Vmax evidence="4">1.6 umol/min/mg enzyme with tetradecanoyl-coA as substrate</Vmax>
        <Vmax evidence="4">1.85 umol/min/mg enzyme with hexadecanoyl-coA as substrate</Vmax>
        <Vmax evidence="4">0.93 umol/min/mg enzyme with (9Z)-hexadecenoyl-coA as substrate</Vmax>
        <Vmax evidence="4">1.43 umol/min/mg enzyme with octadecanoyl-coA as substrate</Vmax>
        <Vmax evidence="4">0.85 umol/min/mg enzyme with (9Z)-octadecenoyl-coA as substrate</Vmax>
        <Vmax evidence="4">0.63 umol/min/mg enzyme with (9Z,12Z)-octadecadienoyl-coA as substrate</Vmax>
        <Vmax evidence="4">0.71 umol/min/mg enzyme with eicosanoyl-coA as substrate</Vmax>
        <Vmax evidence="4">0.7 umol/min/mg enzyme with (5Z,8Z,11Z,14Z)-eicosatetraenoyl-coA as substrate</Vmax>
        <Vmax evidence="4">0.37 umol/min/mg enzyme with docosanoyl-coA as substrate</Vmax>
        <Vmax evidence="4">0.2 umol/min/mg enzyme with tetracosanoyl-coA as substrate</Vmax>
        <Vmax evidence="4">0.22 umol/min/mg enzyme with hexacosanoyl-coA as substrate</Vmax>
    </kinetics>
</comment>
<comment type="pathway">
    <text evidence="8 9">Lipid metabolism; fatty acid metabolism.</text>
</comment>
<comment type="subcellular location">
    <subcellularLocation>
        <location evidence="4">Peroxisome</location>
    </subcellularLocation>
</comment>
<comment type="alternative products">
    <event type="alternative splicing"/>
    <isoform>
        <id>Q9QYR7-1</id>
        <name>1</name>
        <name>PTE-Ia 5':1</name>
        <sequence type="displayed"/>
    </isoform>
    <isoform>
        <id>Q9QYR7-2</id>
        <name>2</name>
        <name>PTE-Ia 5':2</name>
        <sequence type="described" ref="VSP_010994"/>
    </isoform>
</comment>
<comment type="tissue specificity">
    <text evidence="3 4">Widely expressed. Highly expressed in the kidney, expressed at low level in the liver. Isoform 2 is expressed in the kidney, but not in the liver. Isoform 1 is liver-specific (PubMed:10567408). Highly expressed in kidney (at protein level) (PubMed:15007068).</text>
</comment>
<comment type="induction">
    <text>In the liver and kidney, by peroxisome proliferator (such as Clofibrate) treatment, via the peroxisome proliferator-activated receptors (PPARs) or fasting for 24 hours.</text>
</comment>
<comment type="similarity">
    <text evidence="7">Belongs to the C/M/P thioester hydrolase family.</text>
</comment>
<protein>
    <recommendedName>
        <fullName>Acyl-coenzyme A thioesterase 3</fullName>
        <shortName>Acyl-CoA thioesterase 3</shortName>
        <ecNumber evidence="4">3.1.2.2</ecNumber>
    </recommendedName>
    <alternativeName>
        <fullName>PTE-Ia</fullName>
    </alternativeName>
    <alternativeName>
        <fullName>Peroxisomal acyl-coenzyme A thioester hydrolase 2a</fullName>
    </alternativeName>
    <alternativeName>
        <fullName>Peroxisomal long-chain acyl-CoA thioesterase 2</fullName>
    </alternativeName>
</protein>
<reference key="1">
    <citation type="journal article" date="1999" name="J. Biol. Chem.">
        <title>Peroxisome proliferator-induced long chain acyl-CoA thioesterases comprise a highly conserved novel multi-gene family involved in lipid metabolism.</title>
        <authorList>
            <person name="Hunt M.C."/>
            <person name="Nousiainen S.E.B."/>
            <person name="Huttunen M.K."/>
            <person name="Orii K.E."/>
            <person name="Svensson L.T."/>
            <person name="Alexson S.E.H."/>
        </authorList>
    </citation>
    <scope>NUCLEOTIDE SEQUENCE [GENOMIC DNA] (ISOFORM 1)</scope>
    <scope>TISSUE SPECIFICITY</scope>
    <source>
        <strain>C57BL/6J</strain>
    </source>
</reference>
<reference key="2">
    <citation type="journal article" date="2004" name="J. Biol. Chem.">
        <title>Molecular cloning and characterization of two mouse peroxisome proliferator-activated receptor alpha (PPARalpha)-regulated peroxisomal acyl-CoA thioesterases.</title>
        <authorList>
            <person name="Westin M.A.K."/>
            <person name="Alexson S.E.H."/>
            <person name="Hunt M.C."/>
        </authorList>
    </citation>
    <scope>NUCLEOTIDE SEQUENCE [MRNA] (ISOFORM 2)</scope>
    <scope>FUNCTION</scope>
    <scope>CATALYTIC ACTIVITY</scope>
    <scope>BIOPHYSICOCHEMICAL PROPERTIES</scope>
    <scope>PATHWAY</scope>
    <scope>SUBCELLULAR LOCATION</scope>
    <scope>TISSUE SPECIFICITY</scope>
    <source>
        <strain>129/Sv</strain>
    </source>
</reference>
<reference key="3">
    <citation type="journal article" date="2006" name="FASEB J.">
        <title>Analysis of the mouse and human acyl-CoA thioesterase (ACOT) gene clusters shows that convergent, functional evolution results in a reduced number of human peroxisomal ACOTs.</title>
        <authorList>
            <person name="Hunt M.C."/>
            <person name="Rautanen A."/>
            <person name="Westin M.A.K."/>
            <person name="Svensson L.T."/>
            <person name="Alexson S.E.H."/>
        </authorList>
    </citation>
    <scope>FUNCTION</scope>
    <scope>CATALYTIC ACTIVITY</scope>
    <scope>BIOPHYSICOCHEMICAL PROPERTIES</scope>
    <scope>PATHWAY</scope>
</reference>
<reference key="4">
    <citation type="journal article" date="2010" name="Cell">
        <title>A tissue-specific atlas of mouse protein phosphorylation and expression.</title>
        <authorList>
            <person name="Huttlin E.L."/>
            <person name="Jedrychowski M.P."/>
            <person name="Elias J.E."/>
            <person name="Goswami T."/>
            <person name="Rad R."/>
            <person name="Beausoleil S.A."/>
            <person name="Villen J."/>
            <person name="Haas W."/>
            <person name="Sowa M.E."/>
            <person name="Gygi S.P."/>
        </authorList>
    </citation>
    <scope>IDENTIFICATION BY MASS SPECTROMETRY [LARGE SCALE ANALYSIS]</scope>
    <source>
        <tissue>Kidney</tissue>
    </source>
</reference>
<evidence type="ECO:0000250" key="1"/>
<evidence type="ECO:0000255" key="2"/>
<evidence type="ECO:0000269" key="3">
    <source>
    </source>
</evidence>
<evidence type="ECO:0000269" key="4">
    <source>
    </source>
</evidence>
<evidence type="ECO:0000269" key="5">
    <source>
    </source>
</evidence>
<evidence type="ECO:0000303" key="6">
    <source>
    </source>
</evidence>
<evidence type="ECO:0000305" key="7"/>
<evidence type="ECO:0000305" key="8">
    <source>
    </source>
</evidence>
<evidence type="ECO:0000305" key="9">
    <source>
    </source>
</evidence>
<sequence length="432" mass="47490">MHAFTTQNPNRMAPTVILEPAGGCLCDQPVHIAVRGLAPEQPVTLRSVLRDEKGALFRAHARYRADSHGELDLARTPALGGSFSGLEPMGLLWAMEPDRPFWRLIKRDVQTPFVVELEVLDGHEPDGGQRLARAVHERHFMAPGVRRVPVREGRVRATLFLPPGTGPFPGIIDLFGIGSGLLEYRASLLAGKGFAVMALAYNNYEDLPKDMDIIHLEYFEEAVTYLLSHPQVTGSGVGVLGISKGGELGFAMASFLKNITAAVIINGSISNIGGNLQYKDETVPSVGINTKRVKRTKDGLKDIVDLLNNPLEGPDQKSLIPVERSDTAFLFLVGQDDHNWKSEFYAREASKRLQAHGKEKPQIICYPETGHHIEPPYFPLCKASLNSLVGGPVIWGGEPRAHAMAQVDAWQQLQTFFHNHLDGKKKTIPAKL</sequence>
<organism>
    <name type="scientific">Mus musculus</name>
    <name type="common">Mouse</name>
    <dbReference type="NCBI Taxonomy" id="10090"/>
    <lineage>
        <taxon>Eukaryota</taxon>
        <taxon>Metazoa</taxon>
        <taxon>Chordata</taxon>
        <taxon>Craniata</taxon>
        <taxon>Vertebrata</taxon>
        <taxon>Euteleostomi</taxon>
        <taxon>Mammalia</taxon>
        <taxon>Eutheria</taxon>
        <taxon>Euarchontoglires</taxon>
        <taxon>Glires</taxon>
        <taxon>Rodentia</taxon>
        <taxon>Myomorpha</taxon>
        <taxon>Muroidea</taxon>
        <taxon>Muridae</taxon>
        <taxon>Murinae</taxon>
        <taxon>Mus</taxon>
        <taxon>Mus</taxon>
    </lineage>
</organism>
<name>ACOT3_MOUSE</name>
<proteinExistence type="evidence at protein level"/>
<dbReference type="EC" id="3.1.2.2" evidence="4"/>
<dbReference type="EMBL" id="AF180804">
    <property type="protein sequence ID" value="AAF13873.1"/>
    <property type="molecule type" value="Genomic_DNA"/>
</dbReference>
<dbReference type="EMBL" id="AF180802">
    <property type="protein sequence ID" value="AAF13873.1"/>
    <property type="status" value="JOINED"/>
    <property type="molecule type" value="Genomic_DNA"/>
</dbReference>
<dbReference type="EMBL" id="AF180803">
    <property type="protein sequence ID" value="AAF13873.1"/>
    <property type="status" value="JOINED"/>
    <property type="molecule type" value="Genomic_DNA"/>
</dbReference>
<dbReference type="EMBL" id="AY563098">
    <property type="protein sequence ID" value="AAS75456.1"/>
    <property type="molecule type" value="mRNA"/>
</dbReference>
<dbReference type="CCDS" id="CCDS26036.1">
    <molecule id="Q9QYR7-1"/>
</dbReference>
<dbReference type="CCDS" id="CCDS83985.1">
    <molecule id="Q9QYR7-2"/>
</dbReference>
<dbReference type="RefSeq" id="NP_001333630.1">
    <molecule id="Q9QYR7-2"/>
    <property type="nucleotide sequence ID" value="NM_001346701.1"/>
</dbReference>
<dbReference type="RefSeq" id="NP_599007.1">
    <molecule id="Q9QYR7-1"/>
    <property type="nucleotide sequence ID" value="NM_134246.3"/>
</dbReference>
<dbReference type="SMR" id="Q9QYR7"/>
<dbReference type="FunCoup" id="Q9QYR7">
    <property type="interactions" value="127"/>
</dbReference>
<dbReference type="STRING" id="10090.ENSMUSP00000021653"/>
<dbReference type="SwissLipids" id="SLP:000000530"/>
<dbReference type="ESTHER" id="mouse-acot3">
    <property type="family name" value="Acyl-CoA_Thioesterase"/>
</dbReference>
<dbReference type="MEROPS" id="S09.A51"/>
<dbReference type="iPTMnet" id="Q9QYR7"/>
<dbReference type="PhosphoSitePlus" id="Q9QYR7"/>
<dbReference type="jPOST" id="Q9QYR7"/>
<dbReference type="PaxDb" id="10090-ENSMUSP00000021653"/>
<dbReference type="ProteomicsDB" id="285649">
    <molecule id="Q9QYR7-1"/>
</dbReference>
<dbReference type="ProteomicsDB" id="285650">
    <molecule id="Q9QYR7-2"/>
</dbReference>
<dbReference type="Pumba" id="Q9QYR7"/>
<dbReference type="DNASU" id="171281"/>
<dbReference type="Ensembl" id="ENSMUST00000021653.8">
    <molecule id="Q9QYR7-1"/>
    <property type="protein sequence ID" value="ENSMUSP00000021653.7"/>
    <property type="gene ID" value="ENSMUSG00000021228.16"/>
</dbReference>
<dbReference type="Ensembl" id="ENSMUST00000120927.8">
    <molecule id="Q9QYR7-2"/>
    <property type="protein sequence ID" value="ENSMUSP00000112678.2"/>
    <property type="gene ID" value="ENSMUSG00000021228.16"/>
</dbReference>
<dbReference type="GeneID" id="171281"/>
<dbReference type="KEGG" id="mmu:171281"/>
<dbReference type="UCSC" id="uc007oef.1">
    <molecule id="Q9QYR7-1"/>
    <property type="organism name" value="mouse"/>
</dbReference>
<dbReference type="AGR" id="MGI:2159619"/>
<dbReference type="CTD" id="171281"/>
<dbReference type="MGI" id="MGI:2159619">
    <property type="gene designation" value="Acot3"/>
</dbReference>
<dbReference type="VEuPathDB" id="HostDB:ENSMUSG00000021228"/>
<dbReference type="eggNOG" id="ENOG502QQ8Z">
    <property type="taxonomic scope" value="Eukaryota"/>
</dbReference>
<dbReference type="GeneTree" id="ENSGT01010000222336"/>
<dbReference type="HOGENOM" id="CLU_029849_4_0_1"/>
<dbReference type="InParanoid" id="Q9QYR7"/>
<dbReference type="OMA" id="LDVPYMP"/>
<dbReference type="OrthoDB" id="6347013at2759"/>
<dbReference type="PhylomeDB" id="Q9QYR7"/>
<dbReference type="TreeFam" id="TF314911"/>
<dbReference type="Reactome" id="R-MMU-77289">
    <property type="pathway name" value="Mitochondrial Fatty Acid Beta-Oxidation"/>
</dbReference>
<dbReference type="Reactome" id="R-MMU-9033241">
    <property type="pathway name" value="Peroxisomal protein import"/>
</dbReference>
<dbReference type="Reactome" id="R-MMU-9837999">
    <property type="pathway name" value="Mitochondrial protein degradation"/>
</dbReference>
<dbReference type="SABIO-RK" id="Q9QYR7"/>
<dbReference type="UniPathway" id="UPA00199"/>
<dbReference type="BioGRID-ORCS" id="171281">
    <property type="hits" value="3 hits in 64 CRISPR screens"/>
</dbReference>
<dbReference type="PRO" id="PR:Q9QYR7"/>
<dbReference type="Proteomes" id="UP000000589">
    <property type="component" value="Chromosome 12"/>
</dbReference>
<dbReference type="RNAct" id="Q9QYR7">
    <property type="molecule type" value="protein"/>
</dbReference>
<dbReference type="Bgee" id="ENSMUSG00000021228">
    <property type="expression patterns" value="Expressed in animal zygote and 51 other cell types or tissues"/>
</dbReference>
<dbReference type="ExpressionAtlas" id="Q9QYR7">
    <property type="expression patterns" value="baseline and differential"/>
</dbReference>
<dbReference type="GO" id="GO:0005829">
    <property type="term" value="C:cytosol"/>
    <property type="evidence" value="ECO:0000314"/>
    <property type="project" value="MGI"/>
</dbReference>
<dbReference type="GO" id="GO:0005777">
    <property type="term" value="C:peroxisome"/>
    <property type="evidence" value="ECO:0000314"/>
    <property type="project" value="UniProtKB"/>
</dbReference>
<dbReference type="GO" id="GO:0052689">
    <property type="term" value="F:carboxylic ester hydrolase activity"/>
    <property type="evidence" value="ECO:0007669"/>
    <property type="project" value="UniProtKB-KW"/>
</dbReference>
<dbReference type="GO" id="GO:0047617">
    <property type="term" value="F:fatty acyl-CoA hydrolase activity"/>
    <property type="evidence" value="ECO:0000314"/>
    <property type="project" value="HGNC-UCL"/>
</dbReference>
<dbReference type="GO" id="GO:0006637">
    <property type="term" value="P:acyl-CoA metabolic process"/>
    <property type="evidence" value="ECO:0000314"/>
    <property type="project" value="HGNC-UCL"/>
</dbReference>
<dbReference type="GO" id="GO:0001676">
    <property type="term" value="P:long-chain fatty acid metabolic process"/>
    <property type="evidence" value="ECO:0000314"/>
    <property type="project" value="HGNC-UCL"/>
</dbReference>
<dbReference type="GO" id="GO:0032788">
    <property type="term" value="P:saturated monocarboxylic acid metabolic process"/>
    <property type="evidence" value="ECO:0000314"/>
    <property type="project" value="HGNC-UCL"/>
</dbReference>
<dbReference type="GO" id="GO:0032789">
    <property type="term" value="P:unsaturated monocarboxylic acid metabolic process"/>
    <property type="evidence" value="ECO:0000314"/>
    <property type="project" value="HGNC-UCL"/>
</dbReference>
<dbReference type="GO" id="GO:0000038">
    <property type="term" value="P:very long-chain fatty acid metabolic process"/>
    <property type="evidence" value="ECO:0000314"/>
    <property type="project" value="HGNC-UCL"/>
</dbReference>
<dbReference type="FunFam" id="2.60.40.2240:FF:000001">
    <property type="entry name" value="acyl-coenzyme A thioesterase 4"/>
    <property type="match status" value="1"/>
</dbReference>
<dbReference type="FunFam" id="3.40.50.1820:FF:000024">
    <property type="entry name" value="acyl-coenzyme A thioesterase 4"/>
    <property type="match status" value="1"/>
</dbReference>
<dbReference type="Gene3D" id="2.60.40.2240">
    <property type="entry name" value="Acyl-CoA thioester hydrolase/BAAT N-terminal domain"/>
    <property type="match status" value="1"/>
</dbReference>
<dbReference type="Gene3D" id="3.40.50.1820">
    <property type="entry name" value="alpha/beta hydrolase"/>
    <property type="match status" value="1"/>
</dbReference>
<dbReference type="InterPro" id="IPR029058">
    <property type="entry name" value="AB_hydrolase_fold"/>
</dbReference>
<dbReference type="InterPro" id="IPR016662">
    <property type="entry name" value="Acyl-CoA_thioEstase_long-chain"/>
</dbReference>
<dbReference type="InterPro" id="IPR014940">
    <property type="entry name" value="BAAT_C"/>
</dbReference>
<dbReference type="InterPro" id="IPR006862">
    <property type="entry name" value="Thio_Ohase/aa_AcTrfase"/>
</dbReference>
<dbReference type="InterPro" id="IPR042490">
    <property type="entry name" value="Thio_Ohase/BAAT_N"/>
</dbReference>
<dbReference type="PANTHER" id="PTHR10824:SF16">
    <property type="entry name" value="ACYL-COENZYME A THIOESTERASE 1-RELATED"/>
    <property type="match status" value="1"/>
</dbReference>
<dbReference type="PANTHER" id="PTHR10824">
    <property type="entry name" value="ACYL-COENZYME A THIOESTERASE-RELATED"/>
    <property type="match status" value="1"/>
</dbReference>
<dbReference type="Pfam" id="PF08840">
    <property type="entry name" value="BAAT_C"/>
    <property type="match status" value="1"/>
</dbReference>
<dbReference type="Pfam" id="PF04775">
    <property type="entry name" value="Bile_Hydr_Trans"/>
    <property type="match status" value="1"/>
</dbReference>
<dbReference type="PIRSF" id="PIRSF016521">
    <property type="entry name" value="Acyl-CoA_hydro"/>
    <property type="match status" value="1"/>
</dbReference>
<dbReference type="SUPFAM" id="SSF53474">
    <property type="entry name" value="alpha/beta-Hydrolases"/>
    <property type="match status" value="1"/>
</dbReference>